<evidence type="ECO:0000255" key="1">
    <source>
        <dbReference type="HAMAP-Rule" id="MF_00544"/>
    </source>
</evidence>
<organism>
    <name type="scientific">Nitratidesulfovibrio vulgaris (strain ATCC 29579 / DSM 644 / CCUG 34227 / NCIMB 8303 / VKM B-1760 / Hildenborough)</name>
    <name type="common">Desulfovibrio vulgaris</name>
    <dbReference type="NCBI Taxonomy" id="882"/>
    <lineage>
        <taxon>Bacteria</taxon>
        <taxon>Pseudomonadati</taxon>
        <taxon>Thermodesulfobacteriota</taxon>
        <taxon>Desulfovibrionia</taxon>
        <taxon>Desulfovibrionales</taxon>
        <taxon>Desulfovibrionaceae</taxon>
        <taxon>Nitratidesulfovibrio</taxon>
    </lineage>
</organism>
<feature type="chain" id="PRO_1000061070" description="Tryptophanase">
    <location>
        <begin position="1"/>
        <end position="462"/>
    </location>
</feature>
<feature type="modified residue" description="N6-(pyridoxal phosphate)lysine" evidence="1">
    <location>
        <position position="261"/>
    </location>
</feature>
<sequence length="462" mass="51358">MKRIPEPFRIKMIEPIRMTTLEDRTRALEEAGYNPFLLKSEDVYIDLLTDSGTGAMSDRQWAGLMMGDEAYAGSRNFLNLEKAVKDVFGYEHTVPTHQGRGAEQILFPCLVARMKGDKPVFISNYHFDTTAAHVEMTGAKAINVVTEKAFDTGTYYDWKGDFDLEKLEATIRQHGAQNVAGIIVTITCNSAGGQPVSMANIREAAAIAKRHGITVIIDSARFCENAWFIKQREAGYADKSIREIIREMYSYGDVLTCSAKKDPIVNIGGLCCIKEDVDLFRAVQVRCVPMEGFVTYGGLAGRDMEALAIGLYEGTDEHFLTYRIKQVEYLGERLRQGGVPIQYPTGGHAVFIDAKLMLPHIPGNQFPAHALANEVYIEGGVRGVEIGSLLLGRDPATGLQKESPLELLRLAIPRRVYTNDHMDYIADTVIAVLDRASSIKGLEFTYEPPVLRHFTARLRPIA</sequence>
<name>TNAA_NITV2</name>
<proteinExistence type="inferred from homology"/>
<comment type="catalytic activity">
    <reaction evidence="1">
        <text>L-tryptophan + H2O = indole + pyruvate + NH4(+)</text>
        <dbReference type="Rhea" id="RHEA:19553"/>
        <dbReference type="ChEBI" id="CHEBI:15361"/>
        <dbReference type="ChEBI" id="CHEBI:15377"/>
        <dbReference type="ChEBI" id="CHEBI:16881"/>
        <dbReference type="ChEBI" id="CHEBI:28938"/>
        <dbReference type="ChEBI" id="CHEBI:57912"/>
        <dbReference type="EC" id="4.1.99.1"/>
    </reaction>
</comment>
<comment type="cofactor">
    <cofactor evidence="1">
        <name>pyridoxal 5'-phosphate</name>
        <dbReference type="ChEBI" id="CHEBI:597326"/>
    </cofactor>
</comment>
<comment type="pathway">
    <text evidence="1">Amino-acid degradation; L-tryptophan degradation via pyruvate pathway; indole and pyruvate from L-tryptophan: step 1/1.</text>
</comment>
<comment type="subunit">
    <text evidence="1">Homotetramer.</text>
</comment>
<comment type="similarity">
    <text evidence="1">Belongs to the beta-eliminating lyase family.</text>
</comment>
<accession>Q729Z3</accession>
<gene>
    <name evidence="1" type="primary">tnaA</name>
    <name type="ordered locus">DVU_2204</name>
</gene>
<keyword id="KW-0456">Lyase</keyword>
<keyword id="KW-0663">Pyridoxal phosphate</keyword>
<keyword id="KW-1185">Reference proteome</keyword>
<keyword id="KW-0823">Tryptophan catabolism</keyword>
<dbReference type="EC" id="4.1.99.1" evidence="1"/>
<dbReference type="EMBL" id="AE017285">
    <property type="protein sequence ID" value="AAS96677.1"/>
    <property type="molecule type" value="Genomic_DNA"/>
</dbReference>
<dbReference type="RefSeq" id="WP_010939479.1">
    <property type="nucleotide sequence ID" value="NC_002937.3"/>
</dbReference>
<dbReference type="RefSeq" id="YP_011417.1">
    <property type="nucleotide sequence ID" value="NC_002937.3"/>
</dbReference>
<dbReference type="SMR" id="Q729Z3"/>
<dbReference type="STRING" id="882.DVU_2204"/>
<dbReference type="PaxDb" id="882-DVU_2204"/>
<dbReference type="EnsemblBacteria" id="AAS96677">
    <property type="protein sequence ID" value="AAS96677"/>
    <property type="gene ID" value="DVU_2204"/>
</dbReference>
<dbReference type="KEGG" id="dvu:DVU_2204"/>
<dbReference type="PATRIC" id="fig|882.5.peg.2003"/>
<dbReference type="eggNOG" id="COG3033">
    <property type="taxonomic scope" value="Bacteria"/>
</dbReference>
<dbReference type="HOGENOM" id="CLU_047223_0_0_7"/>
<dbReference type="OrthoDB" id="9764079at2"/>
<dbReference type="PhylomeDB" id="Q729Z3"/>
<dbReference type="UniPathway" id="UPA00332">
    <property type="reaction ID" value="UER00452"/>
</dbReference>
<dbReference type="Proteomes" id="UP000002194">
    <property type="component" value="Chromosome"/>
</dbReference>
<dbReference type="GO" id="GO:0009034">
    <property type="term" value="F:tryptophanase activity"/>
    <property type="evidence" value="ECO:0007669"/>
    <property type="project" value="UniProtKB-UniRule"/>
</dbReference>
<dbReference type="CDD" id="cd00617">
    <property type="entry name" value="Tnase_like"/>
    <property type="match status" value="1"/>
</dbReference>
<dbReference type="Gene3D" id="3.90.1150.10">
    <property type="entry name" value="Aspartate Aminotransferase, domain 1"/>
    <property type="match status" value="1"/>
</dbReference>
<dbReference type="Gene3D" id="3.40.640.10">
    <property type="entry name" value="Type I PLP-dependent aspartate aminotransferase-like (Major domain)"/>
    <property type="match status" value="1"/>
</dbReference>
<dbReference type="HAMAP" id="MF_00544">
    <property type="entry name" value="Tryptophanase"/>
    <property type="match status" value="1"/>
</dbReference>
<dbReference type="InterPro" id="IPR001597">
    <property type="entry name" value="ArAA_b-elim_lyase/Thr_aldolase"/>
</dbReference>
<dbReference type="InterPro" id="IPR011166">
    <property type="entry name" value="Beta-eliminating_lyase"/>
</dbReference>
<dbReference type="InterPro" id="IPR015424">
    <property type="entry name" value="PyrdxlP-dep_Trfase"/>
</dbReference>
<dbReference type="InterPro" id="IPR015421">
    <property type="entry name" value="PyrdxlP-dep_Trfase_major"/>
</dbReference>
<dbReference type="InterPro" id="IPR015422">
    <property type="entry name" value="PyrdxlP-dep_Trfase_small"/>
</dbReference>
<dbReference type="InterPro" id="IPR013440">
    <property type="entry name" value="TNase"/>
</dbReference>
<dbReference type="NCBIfam" id="NF009709">
    <property type="entry name" value="PRK13238.1"/>
    <property type="match status" value="1"/>
</dbReference>
<dbReference type="PANTHER" id="PTHR32325">
    <property type="entry name" value="BETA-ELIMINATING LYASE-LIKE PROTEIN-RELATED"/>
    <property type="match status" value="1"/>
</dbReference>
<dbReference type="PANTHER" id="PTHR32325:SF4">
    <property type="entry name" value="TRYPTOPHANASE"/>
    <property type="match status" value="1"/>
</dbReference>
<dbReference type="Pfam" id="PF01212">
    <property type="entry name" value="Beta_elim_lyase"/>
    <property type="match status" value="1"/>
</dbReference>
<dbReference type="PIRSF" id="PIRSF001386">
    <property type="entry name" value="Trpase"/>
    <property type="match status" value="1"/>
</dbReference>
<dbReference type="SUPFAM" id="SSF53383">
    <property type="entry name" value="PLP-dependent transferases"/>
    <property type="match status" value="1"/>
</dbReference>
<reference key="1">
    <citation type="journal article" date="2004" name="Nat. Biotechnol.">
        <title>The genome sequence of the anaerobic, sulfate-reducing bacterium Desulfovibrio vulgaris Hildenborough.</title>
        <authorList>
            <person name="Heidelberg J.F."/>
            <person name="Seshadri R."/>
            <person name="Haveman S.A."/>
            <person name="Hemme C.L."/>
            <person name="Paulsen I.T."/>
            <person name="Kolonay J.F."/>
            <person name="Eisen J.A."/>
            <person name="Ward N.L."/>
            <person name="Methe B.A."/>
            <person name="Brinkac L.M."/>
            <person name="Daugherty S.C."/>
            <person name="DeBoy R.T."/>
            <person name="Dodson R.J."/>
            <person name="Durkin A.S."/>
            <person name="Madupu R."/>
            <person name="Nelson W.C."/>
            <person name="Sullivan S.A."/>
            <person name="Fouts D.E."/>
            <person name="Haft D.H."/>
            <person name="Selengut J."/>
            <person name="Peterson J.D."/>
            <person name="Davidsen T.M."/>
            <person name="Zafar N."/>
            <person name="Zhou L."/>
            <person name="Radune D."/>
            <person name="Dimitrov G."/>
            <person name="Hance M."/>
            <person name="Tran K."/>
            <person name="Khouri H.M."/>
            <person name="Gill J."/>
            <person name="Utterback T.R."/>
            <person name="Feldblyum T.V."/>
            <person name="Wall J.D."/>
            <person name="Voordouw G."/>
            <person name="Fraser C.M."/>
        </authorList>
    </citation>
    <scope>NUCLEOTIDE SEQUENCE [LARGE SCALE GENOMIC DNA]</scope>
    <source>
        <strain>ATCC 29579 / DSM 644 / CCUG 34227 / NCIMB 8303 / VKM B-1760 / Hildenborough</strain>
    </source>
</reference>
<protein>
    <recommendedName>
        <fullName evidence="1">Tryptophanase</fullName>
        <ecNumber evidence="1">4.1.99.1</ecNumber>
    </recommendedName>
    <alternativeName>
        <fullName evidence="1">L-tryptophan indole-lyase</fullName>
        <shortName evidence="1">TNase</shortName>
    </alternativeName>
</protein>